<keyword id="KW-0204">Cytolysis</keyword>
<keyword id="KW-1061">Dermonecrotic toxin</keyword>
<keyword id="KW-1015">Disulfide bond</keyword>
<keyword id="KW-0354">Hemolysis</keyword>
<keyword id="KW-0442">Lipid degradation</keyword>
<keyword id="KW-0443">Lipid metabolism</keyword>
<keyword id="KW-0456">Lyase</keyword>
<keyword id="KW-0460">Magnesium</keyword>
<keyword id="KW-0479">Metal-binding</keyword>
<keyword id="KW-0964">Secreted</keyword>
<keyword id="KW-0800">Toxin</keyword>
<proteinExistence type="evidence at protein level"/>
<name>A312_LOXLA</name>
<evidence type="ECO:0000250" key="1">
    <source>
        <dbReference type="UniProtKB" id="A0A0D4WTV1"/>
    </source>
</evidence>
<evidence type="ECO:0000250" key="2">
    <source>
        <dbReference type="UniProtKB" id="A0A0D4WV12"/>
    </source>
</evidence>
<evidence type="ECO:0000250" key="3">
    <source>
        <dbReference type="UniProtKB" id="Q4ZFU2"/>
    </source>
</evidence>
<evidence type="ECO:0000250" key="4">
    <source>
        <dbReference type="UniProtKB" id="Q8I914"/>
    </source>
</evidence>
<evidence type="ECO:0000269" key="5">
    <source>
    </source>
</evidence>
<evidence type="ECO:0000303" key="6">
    <source>
    </source>
</evidence>
<evidence type="ECO:0000305" key="7"/>
<evidence type="ECO:0000305" key="8">
    <source>
    </source>
</evidence>
<accession>Q1KY80</accession>
<protein>
    <recommendedName>
        <fullName>Dermonecrotic toxin LlSicTox-alphaIII1ii</fullName>
        <ecNumber evidence="3">4.6.1.-</ecNumber>
    </recommendedName>
    <alternativeName>
        <fullName evidence="6">Ll1</fullName>
    </alternativeName>
    <alternativeName>
        <fullName>Phospholipase D</fullName>
        <shortName>PLD</shortName>
    </alternativeName>
    <alternativeName>
        <fullName>Sphingomyelin phosphodiesterase D 1</fullName>
        <shortName>SMD 1</shortName>
        <shortName>SMase D 1</shortName>
        <shortName>Sphingomyelinase D 1</shortName>
    </alternativeName>
</protein>
<reference key="1">
    <citation type="journal article" date="2006" name="Toxicon">
        <title>North and south american Loxosceles spiders: development of a polyvalent antivenom with recombinant sphingomyelinases D as antigens.</title>
        <authorList>
            <person name="Olvera A."/>
            <person name="Ramos-Cerrillo B."/>
            <person name="Estevez J."/>
            <person name="Clement H."/>
            <person name="de Roodt A."/>
            <person name="Paniagua-Solis J."/>
            <person name="Vazquez H."/>
            <person name="Zavaleta A."/>
            <person name="Arruz M.S."/>
            <person name="Stock R.P."/>
            <person name="Alagon A."/>
        </authorList>
    </citation>
    <scope>NUCLEOTIDE SEQUENCE [MRNA]</scope>
    <scope>FUNCTION</scope>
    <scope>TOXIC DOSE</scope>
    <scope>CATALYTIC ACTIVITY</scope>
    <source>
        <tissue>Venom gland</tissue>
    </source>
</reference>
<dbReference type="EC" id="4.6.1.-" evidence="3"/>
<dbReference type="EMBL" id="DQ369999">
    <property type="protein sequence ID" value="ABD15447.1"/>
    <property type="molecule type" value="mRNA"/>
</dbReference>
<dbReference type="SMR" id="Q1KY80"/>
<dbReference type="ArachnoServer" id="AS000148">
    <property type="toxin name" value="Sphingomyelinase D (LlSicTox-alphaIII1ii)"/>
</dbReference>
<dbReference type="BRENDA" id="3.1.4.41">
    <property type="organism ID" value="6922"/>
</dbReference>
<dbReference type="GO" id="GO:0005576">
    <property type="term" value="C:extracellular region"/>
    <property type="evidence" value="ECO:0007669"/>
    <property type="project" value="UniProtKB-SubCell"/>
</dbReference>
<dbReference type="GO" id="GO:0016829">
    <property type="term" value="F:lyase activity"/>
    <property type="evidence" value="ECO:0007669"/>
    <property type="project" value="UniProtKB-KW"/>
</dbReference>
<dbReference type="GO" id="GO:0046872">
    <property type="term" value="F:metal ion binding"/>
    <property type="evidence" value="ECO:0007669"/>
    <property type="project" value="UniProtKB-KW"/>
</dbReference>
<dbReference type="GO" id="GO:0008081">
    <property type="term" value="F:phosphoric diester hydrolase activity"/>
    <property type="evidence" value="ECO:0007669"/>
    <property type="project" value="InterPro"/>
</dbReference>
<dbReference type="GO" id="GO:0090729">
    <property type="term" value="F:toxin activity"/>
    <property type="evidence" value="ECO:0007669"/>
    <property type="project" value="UniProtKB-KW"/>
</dbReference>
<dbReference type="GO" id="GO:0031640">
    <property type="term" value="P:killing of cells of another organism"/>
    <property type="evidence" value="ECO:0007669"/>
    <property type="project" value="UniProtKB-KW"/>
</dbReference>
<dbReference type="GO" id="GO:0016042">
    <property type="term" value="P:lipid catabolic process"/>
    <property type="evidence" value="ECO:0007669"/>
    <property type="project" value="UniProtKB-KW"/>
</dbReference>
<dbReference type="CDD" id="cd08576">
    <property type="entry name" value="GDPD_like_SMaseD_PLD"/>
    <property type="match status" value="1"/>
</dbReference>
<dbReference type="Gene3D" id="3.20.20.190">
    <property type="entry name" value="Phosphatidylinositol (PI) phosphodiesterase"/>
    <property type="match status" value="1"/>
</dbReference>
<dbReference type="InterPro" id="IPR017946">
    <property type="entry name" value="PLC-like_Pdiesterase_TIM-brl"/>
</dbReference>
<dbReference type="SUPFAM" id="SSF51695">
    <property type="entry name" value="PLC-like phosphodiesterases"/>
    <property type="match status" value="1"/>
</dbReference>
<comment type="function">
    <text evidence="1 4 5">Dermonecrotic toxins cleave the phosphodiester linkage between the phosphate and headgroup of certain phospholipids (sphingolipid and lysolipid substrates), forming an alcohol (often choline) and a cyclic phosphate (By similarity). This toxin acts on sphingomyelin (SM) with high activity (56.8 U/mg) (PubMed:16759681). It may also act on ceramide phosphoethanolamine (CPE), lysophosphatidylcholine (LPC) and lysophosphatidylethanolamine (LPE), but not on lysophosphatidylserine (LPS), and lysophosphatidylglycerol (LPG) (By similarity). It acts by transphosphatidylation, releasing exclusively cyclic phosphate products as second products (By similarity). Induces dermonecrosis, hemolysis, increased vascular permeability, edema, inflammatory response, and platelet aggregation (By similarity). Is lethal to mice (PubMed:16759681).</text>
</comment>
<comment type="catalytic activity">
    <reaction evidence="8">
        <text>an N-(acyl)-sphingosylphosphocholine = an N-(acyl)-sphingosyl-1,3-cyclic phosphate + choline</text>
        <dbReference type="Rhea" id="RHEA:60652"/>
        <dbReference type="ChEBI" id="CHEBI:15354"/>
        <dbReference type="ChEBI" id="CHEBI:64583"/>
        <dbReference type="ChEBI" id="CHEBI:143892"/>
    </reaction>
</comment>
<comment type="catalytic activity">
    <reaction evidence="1">
        <text>an N-(acyl)-sphingosylphosphoethanolamine = an N-(acyl)-sphingosyl-1,3-cyclic phosphate + ethanolamine</text>
        <dbReference type="Rhea" id="RHEA:60648"/>
        <dbReference type="ChEBI" id="CHEBI:57603"/>
        <dbReference type="ChEBI" id="CHEBI:143891"/>
        <dbReference type="ChEBI" id="CHEBI:143892"/>
    </reaction>
</comment>
<comment type="catalytic activity">
    <reaction evidence="1">
        <text>a 1-acyl-sn-glycero-3-phosphocholine = a 1-acyl-sn-glycero-2,3-cyclic phosphate + choline</text>
        <dbReference type="Rhea" id="RHEA:60700"/>
        <dbReference type="ChEBI" id="CHEBI:15354"/>
        <dbReference type="ChEBI" id="CHEBI:58168"/>
        <dbReference type="ChEBI" id="CHEBI:143947"/>
    </reaction>
</comment>
<comment type="catalytic activity">
    <reaction evidence="1">
        <text>a 1-acyl-sn-glycero-3-phosphoethanolamine = a 1-acyl-sn-glycero-2,3-cyclic phosphate + ethanolamine</text>
        <dbReference type="Rhea" id="RHEA:60704"/>
        <dbReference type="ChEBI" id="CHEBI:57603"/>
        <dbReference type="ChEBI" id="CHEBI:64381"/>
        <dbReference type="ChEBI" id="CHEBI:143947"/>
    </reaction>
</comment>
<comment type="cofactor">
    <cofactor evidence="4">
        <name>Mg(2+)</name>
        <dbReference type="ChEBI" id="CHEBI:18420"/>
    </cofactor>
    <text evidence="4">Binds 1 Mg(2+) ion per subunit.</text>
</comment>
<comment type="subcellular location">
    <subcellularLocation>
        <location evidence="8">Secreted</location>
    </subcellularLocation>
</comment>
<comment type="tissue specificity">
    <text evidence="8">Expressed by the venom gland.</text>
</comment>
<comment type="toxic dose">
    <text evidence="5">LD(50) is 565 ug/kg by intraperitoneal injection into mice.</text>
</comment>
<comment type="similarity">
    <text evidence="7">Belongs to the arthropod phospholipase D family. Class I subfamily.</text>
</comment>
<comment type="caution">
    <text evidence="1 2 3">The most common activity assay for dermonecrotic toxins detects enzymatic activity by monitoring choline release from substrate. Liberation of choline from sphingomyelin (SM) or lysophosphatidylcholine (LPC) is commonly assumed to result from substrate hydrolysis, giving either ceramide-1-phosphate (C1P) or lysophosphatidic acid (LPA), respectively, as a second product. However, two studies from Lajoie and colleagues (2013 and 2015) report the observation of exclusive formation of cyclic phosphate products as second products, resulting from intramolecular transphosphatidylation. Cyclic phosphates have vastly different biological properties from their monoester counterparts, and they may be relevant to the pathology of brown spider envenomation.</text>
</comment>
<feature type="chain" id="PRO_0000279579" description="Dermonecrotic toxin LlSicTox-alphaIII1ii">
    <location>
        <begin position="1"/>
        <end position="285"/>
    </location>
</feature>
<feature type="active site" evidence="4">
    <location>
        <position position="12"/>
    </location>
</feature>
<feature type="active site" description="Nucleophile" evidence="4">
    <location>
        <position position="47"/>
    </location>
</feature>
<feature type="binding site" evidence="4">
    <location>
        <position position="32"/>
    </location>
    <ligand>
        <name>Mg(2+)</name>
        <dbReference type="ChEBI" id="CHEBI:18420"/>
    </ligand>
</feature>
<feature type="binding site" evidence="4">
    <location>
        <position position="34"/>
    </location>
    <ligand>
        <name>Mg(2+)</name>
        <dbReference type="ChEBI" id="CHEBI:18420"/>
    </ligand>
</feature>
<feature type="binding site" evidence="4">
    <location>
        <position position="91"/>
    </location>
    <ligand>
        <name>Mg(2+)</name>
        <dbReference type="ChEBI" id="CHEBI:18420"/>
    </ligand>
</feature>
<feature type="disulfide bond" evidence="4">
    <location>
        <begin position="51"/>
        <end position="57"/>
    </location>
</feature>
<organism>
    <name type="scientific">Loxosceles laeta</name>
    <name type="common">South American recluse spider</name>
    <name type="synonym">Scytodes laeta</name>
    <dbReference type="NCBI Taxonomy" id="58217"/>
    <lineage>
        <taxon>Eukaryota</taxon>
        <taxon>Metazoa</taxon>
        <taxon>Ecdysozoa</taxon>
        <taxon>Arthropoda</taxon>
        <taxon>Chelicerata</taxon>
        <taxon>Arachnida</taxon>
        <taxon>Araneae</taxon>
        <taxon>Araneomorphae</taxon>
        <taxon>Haplogynae</taxon>
        <taxon>Scytodoidea</taxon>
        <taxon>Sicariidae</taxon>
        <taxon>Loxosceles</taxon>
    </lineage>
</organism>
<sequence>ADNRRPIWNLAHMVNAVAQIPSFLDLGANALEADVTFKGSVPTYTYHGTPCDFGRDCIRWEYFNVFLKTLKEYTTPGNAKYRDGFILFVLDLKTGSLSNDQVRPAGENVAKELLQNYWNNGNNGGRAYVVLSLPDIGHYEFVRGFKEVLKKEGHEDLLEKVGYDFSGPYLPSLPTLDATHEAYKKAGVDGHIWLSDGLTNFSPLGDMARLKEAIKSRDSANGFINKIYYWSVDKVSTTKAALDVGVDGIMTNHPNVLIGVLKENGYNDKYRLATYDDNPWETFKN</sequence>